<keyword id="KW-0325">Glycoprotein</keyword>
<keyword id="KW-0472">Membrane</keyword>
<keyword id="KW-1185">Reference proteome</keyword>
<keyword id="KW-0732">Signal</keyword>
<keyword id="KW-0812">Transmembrane</keyword>
<keyword id="KW-1133">Transmembrane helix</keyword>
<feature type="signal peptide" evidence="1">
    <location>
        <begin position="1"/>
        <end position="22"/>
    </location>
</feature>
<feature type="chain" id="PRO_0000024715" description="Protein QNR-71">
    <location>
        <begin position="23"/>
        <end position="559"/>
    </location>
</feature>
<feature type="topological domain" description="Extracellular" evidence="1">
    <location>
        <begin position="23"/>
        <end position="487"/>
    </location>
</feature>
<feature type="transmembrane region" description="Helical" evidence="1">
    <location>
        <begin position="488"/>
        <end position="508"/>
    </location>
</feature>
<feature type="topological domain" description="Cytoplasmic" evidence="1">
    <location>
        <begin position="509"/>
        <end position="559"/>
    </location>
</feature>
<feature type="domain" description="PKD" evidence="2">
    <location>
        <begin position="239"/>
        <end position="326"/>
    </location>
</feature>
<feature type="region of interest" description="Disordered" evidence="3">
    <location>
        <begin position="329"/>
        <end position="356"/>
    </location>
</feature>
<feature type="compositionally biased region" description="Polar residues" evidence="3">
    <location>
        <begin position="335"/>
        <end position="347"/>
    </location>
</feature>
<feature type="glycosylation site" description="N-linked (GlcNAc...) asparagine" evidence="1">
    <location>
        <position position="92"/>
    </location>
</feature>
<feature type="glycosylation site" description="N-linked (GlcNAc...) asparagine" evidence="1">
    <location>
        <position position="133"/>
    </location>
</feature>
<feature type="glycosylation site" description="N-linked (GlcNAc...) asparagine" evidence="1">
    <location>
        <position position="145"/>
    </location>
</feature>
<feature type="glycosylation site" description="N-linked (GlcNAc...) asparagine" evidence="1">
    <location>
        <position position="149"/>
    </location>
</feature>
<feature type="glycosylation site" description="N-linked (GlcNAc...) asparagine" evidence="1">
    <location>
        <position position="192"/>
    </location>
</feature>
<feature type="glycosylation site" description="N-linked (GlcNAc...) asparagine" evidence="1">
    <location>
        <position position="199"/>
    </location>
</feature>
<feature type="glycosylation site" description="N-linked (GlcNAc...) asparagine" evidence="1">
    <location>
        <position position="248"/>
    </location>
</feature>
<feature type="glycosylation site" description="N-linked (GlcNAc...) asparagine" evidence="1">
    <location>
        <position position="274"/>
    </location>
</feature>
<feature type="glycosylation site" description="N-linked (GlcNAc...) asparagine" evidence="1">
    <location>
        <position position="307"/>
    </location>
</feature>
<feature type="glycosylation site" description="N-linked (GlcNAc...) asparagine" evidence="1">
    <location>
        <position position="311"/>
    </location>
</feature>
<feature type="glycosylation site" description="N-linked (GlcNAc...) asparagine" evidence="1">
    <location>
        <position position="459"/>
    </location>
</feature>
<reference key="1">
    <citation type="journal article" date="1996" name="EMBO J.">
        <title>Characterization of a new melanocyte-specific gene (QNR-71) expressed in v-myc-transformed quail neuroretina.</title>
        <authorList>
            <person name="Turque N."/>
            <person name="Denhez F."/>
            <person name="Martin P."/>
            <person name="Planque N."/>
            <person name="Bailly M."/>
            <person name="Begue A."/>
            <person name="Stehelin D."/>
            <person name="Saule S."/>
        </authorList>
    </citation>
    <scope>NUCLEOTIDE SEQUENCE [MRNA]</scope>
    <source>
        <tissue>Retina</tissue>
    </source>
</reference>
<reference key="2">
    <citation type="submission" date="1998-07" db="EMBL/GenBank/DDBJ databases">
        <authorList>
            <person name="Saule S."/>
        </authorList>
    </citation>
    <scope>SEQUENCE REVISION</scope>
</reference>
<dbReference type="EMBL" id="X94144">
    <property type="protein sequence ID" value="CAA63859.1"/>
    <property type="molecule type" value="mRNA"/>
</dbReference>
<dbReference type="RefSeq" id="NP_001310122.1">
    <property type="nucleotide sequence ID" value="NM_001323193.1"/>
</dbReference>
<dbReference type="ELM" id="Q90372"/>
<dbReference type="GlyCosmos" id="Q90372">
    <property type="glycosylation" value="11 sites, No reported glycans"/>
</dbReference>
<dbReference type="GeneID" id="107309209"/>
<dbReference type="KEGG" id="cjo:107309209"/>
<dbReference type="CTD" id="10457"/>
<dbReference type="OrthoDB" id="9940970at2759"/>
<dbReference type="Proteomes" id="UP000694412">
    <property type="component" value="Unplaced"/>
</dbReference>
<dbReference type="GO" id="GO:0005886">
    <property type="term" value="C:plasma membrane"/>
    <property type="evidence" value="ECO:0007669"/>
    <property type="project" value="TreeGrafter"/>
</dbReference>
<dbReference type="GO" id="GO:0005178">
    <property type="term" value="F:integrin binding"/>
    <property type="evidence" value="ECO:0007669"/>
    <property type="project" value="TreeGrafter"/>
</dbReference>
<dbReference type="GO" id="GO:0007155">
    <property type="term" value="P:cell adhesion"/>
    <property type="evidence" value="ECO:0007669"/>
    <property type="project" value="TreeGrafter"/>
</dbReference>
<dbReference type="CDD" id="cd00146">
    <property type="entry name" value="PKD"/>
    <property type="match status" value="1"/>
</dbReference>
<dbReference type="FunFam" id="2.60.40.10:FF:000893">
    <property type="entry name" value="Transmembrane glycoprotein NMB"/>
    <property type="match status" value="1"/>
</dbReference>
<dbReference type="Gene3D" id="2.60.40.10">
    <property type="entry name" value="Immunoglobulins"/>
    <property type="match status" value="1"/>
</dbReference>
<dbReference type="InterPro" id="IPR013783">
    <property type="entry name" value="Ig-like_fold"/>
</dbReference>
<dbReference type="InterPro" id="IPR045219">
    <property type="entry name" value="PKAT"/>
</dbReference>
<dbReference type="InterPro" id="IPR046846">
    <property type="entry name" value="PKAT_KLD"/>
</dbReference>
<dbReference type="InterPro" id="IPR022409">
    <property type="entry name" value="PKD/Chitinase_dom"/>
</dbReference>
<dbReference type="InterPro" id="IPR000601">
    <property type="entry name" value="PKD_dom"/>
</dbReference>
<dbReference type="InterPro" id="IPR035986">
    <property type="entry name" value="PKD_dom_sf"/>
</dbReference>
<dbReference type="PANTHER" id="PTHR11861">
    <property type="entry name" value="MELANOCYTE PROTEIN PMEL 17-RELATED"/>
    <property type="match status" value="1"/>
</dbReference>
<dbReference type="PANTHER" id="PTHR11861:SF11">
    <property type="entry name" value="TRANSMEMBRANE GLYCOPROTEIN NMB"/>
    <property type="match status" value="1"/>
</dbReference>
<dbReference type="Pfam" id="PF20433">
    <property type="entry name" value="PKAT_KLD"/>
    <property type="match status" value="1"/>
</dbReference>
<dbReference type="Pfam" id="PF18911">
    <property type="entry name" value="PKD_4"/>
    <property type="match status" value="1"/>
</dbReference>
<dbReference type="SMART" id="SM00089">
    <property type="entry name" value="PKD"/>
    <property type="match status" value="1"/>
</dbReference>
<dbReference type="SUPFAM" id="SSF49299">
    <property type="entry name" value="PKD domain"/>
    <property type="match status" value="1"/>
</dbReference>
<dbReference type="PROSITE" id="PS50093">
    <property type="entry name" value="PKD"/>
    <property type="match status" value="1"/>
</dbReference>
<gene>
    <name type="primary">QNR-71</name>
</gene>
<name>QNR71_COTJA</name>
<organism>
    <name type="scientific">Coturnix japonica</name>
    <name type="common">Japanese quail</name>
    <name type="synonym">Coturnix coturnix japonica</name>
    <dbReference type="NCBI Taxonomy" id="93934"/>
    <lineage>
        <taxon>Eukaryota</taxon>
        <taxon>Metazoa</taxon>
        <taxon>Chordata</taxon>
        <taxon>Craniata</taxon>
        <taxon>Vertebrata</taxon>
        <taxon>Euteleostomi</taxon>
        <taxon>Archelosauria</taxon>
        <taxon>Archosauria</taxon>
        <taxon>Dinosauria</taxon>
        <taxon>Saurischia</taxon>
        <taxon>Theropoda</taxon>
        <taxon>Coelurosauria</taxon>
        <taxon>Aves</taxon>
        <taxon>Neognathae</taxon>
        <taxon>Galloanserae</taxon>
        <taxon>Galliformes</taxon>
        <taxon>Phasianidae</taxon>
        <taxon>Perdicinae</taxon>
        <taxon>Coturnix</taxon>
    </lineage>
</organism>
<sequence>MSQAHRHLALLLPAEAVLCAAAMRFQDVLSNGRTAPVTNHKKIQGWSSDQNKWNEKLYPFWEDNDPRWKDCWKGGKVTTKLVTDSPALVGSNVTFVVTLQFPKCQKEDDDGNIIYQRNCTPDSPAAQDQYVYNWTEWIDNCGWENCTSNHSHNVFPDGKPFPHYPGWRRRNFVYLFHTVGQYYQTIGRSSANFSVNTANITLGKHIMAVSIYRRGHSTYVPIARASTTYVVTDKIPILVSMSQKHDRNISDSIFIKDSPITFDVKIHDPSYYLNDSAISYKWNFGDGSGLFVESGATTSHTFSLQGNFTLNLTVQAIIPVPCKPVTPTPSLPTPAVTTDASSNSDPSAPNEMAEDNPDGGCHIYRYGYYTAGITIVEGILEVNIIQMTSIQMTESQAENPLVDFVVTCQGSFPTDVCTAVSDPTCQVSQGMVCDPVVVTDECVLTIRRAFDEPGTYCINITLGDDTSQALASALISVNGGSSSGTTKGVFIFLGLLAVFGAIGAFVLYKRYKQYKPIERSAGQAENQEGLSAYVSNFKAFFFPKSTERNPLLKSKPGIV</sequence>
<comment type="function">
    <text>Could be involved in melanogenesis.</text>
</comment>
<comment type="subcellular location">
    <subcellularLocation>
        <location evidence="4">Membrane</location>
        <topology evidence="4">Single-pass type I membrane protein</topology>
    </subcellularLocation>
</comment>
<comment type="tissue specificity">
    <text>Melanocyte-specific, restricted to the pigmented layer of the retina and the epidermis.</text>
</comment>
<comment type="developmental stage">
    <text>Transcriptionally regulated by MYC in the transdifferentiation of embryo pigmented epithelial cells. Expression precedes melanization.</text>
</comment>
<comment type="similarity">
    <text evidence="4">Belongs to the PMEL/NMB family.</text>
</comment>
<evidence type="ECO:0000255" key="1"/>
<evidence type="ECO:0000255" key="2">
    <source>
        <dbReference type="PROSITE-ProRule" id="PRU00151"/>
    </source>
</evidence>
<evidence type="ECO:0000256" key="3">
    <source>
        <dbReference type="SAM" id="MobiDB-lite"/>
    </source>
</evidence>
<evidence type="ECO:0000305" key="4"/>
<accession>Q90372</accession>
<proteinExistence type="evidence at transcript level"/>
<protein>
    <recommendedName>
        <fullName>Protein QNR-71</fullName>
    </recommendedName>
</protein>